<proteinExistence type="inferred from homology"/>
<keyword id="KW-0687">Ribonucleoprotein</keyword>
<keyword id="KW-0689">Ribosomal protein</keyword>
<keyword id="KW-0694">RNA-binding</keyword>
<keyword id="KW-0699">rRNA-binding</keyword>
<dbReference type="EMBL" id="CP001184">
    <property type="protein sequence ID" value="ACI60348.1"/>
    <property type="molecule type" value="Genomic_DNA"/>
</dbReference>
<dbReference type="RefSeq" id="WP_004025926.1">
    <property type="nucleotide sequence ID" value="NC_011374.1"/>
</dbReference>
<dbReference type="SMR" id="B5ZB20"/>
<dbReference type="STRING" id="565575.UUR10_0205"/>
<dbReference type="GeneID" id="93848686"/>
<dbReference type="KEGG" id="uue:UUR10_0205"/>
<dbReference type="eggNOG" id="COG0261">
    <property type="taxonomic scope" value="Bacteria"/>
</dbReference>
<dbReference type="HOGENOM" id="CLU_061463_3_1_14"/>
<dbReference type="OrthoDB" id="9813334at2"/>
<dbReference type="Proteomes" id="UP000002018">
    <property type="component" value="Chromosome"/>
</dbReference>
<dbReference type="GO" id="GO:0005737">
    <property type="term" value="C:cytoplasm"/>
    <property type="evidence" value="ECO:0007669"/>
    <property type="project" value="UniProtKB-ARBA"/>
</dbReference>
<dbReference type="GO" id="GO:1990904">
    <property type="term" value="C:ribonucleoprotein complex"/>
    <property type="evidence" value="ECO:0007669"/>
    <property type="project" value="UniProtKB-KW"/>
</dbReference>
<dbReference type="GO" id="GO:0005840">
    <property type="term" value="C:ribosome"/>
    <property type="evidence" value="ECO:0007669"/>
    <property type="project" value="UniProtKB-KW"/>
</dbReference>
<dbReference type="GO" id="GO:0019843">
    <property type="term" value="F:rRNA binding"/>
    <property type="evidence" value="ECO:0007669"/>
    <property type="project" value="UniProtKB-UniRule"/>
</dbReference>
<dbReference type="GO" id="GO:0003735">
    <property type="term" value="F:structural constituent of ribosome"/>
    <property type="evidence" value="ECO:0007669"/>
    <property type="project" value="InterPro"/>
</dbReference>
<dbReference type="GO" id="GO:0006412">
    <property type="term" value="P:translation"/>
    <property type="evidence" value="ECO:0007669"/>
    <property type="project" value="UniProtKB-UniRule"/>
</dbReference>
<dbReference type="HAMAP" id="MF_01363">
    <property type="entry name" value="Ribosomal_bL21"/>
    <property type="match status" value="1"/>
</dbReference>
<dbReference type="InterPro" id="IPR028909">
    <property type="entry name" value="bL21-like"/>
</dbReference>
<dbReference type="InterPro" id="IPR036164">
    <property type="entry name" value="bL21-like_sf"/>
</dbReference>
<dbReference type="InterPro" id="IPR001787">
    <property type="entry name" value="Ribosomal_bL21"/>
</dbReference>
<dbReference type="InterPro" id="IPR018258">
    <property type="entry name" value="Ribosomal_bL21_CS"/>
</dbReference>
<dbReference type="NCBIfam" id="TIGR00061">
    <property type="entry name" value="L21"/>
    <property type="match status" value="1"/>
</dbReference>
<dbReference type="PANTHER" id="PTHR21349">
    <property type="entry name" value="50S RIBOSOMAL PROTEIN L21"/>
    <property type="match status" value="1"/>
</dbReference>
<dbReference type="PANTHER" id="PTHR21349:SF0">
    <property type="entry name" value="LARGE RIBOSOMAL SUBUNIT PROTEIN BL21M"/>
    <property type="match status" value="1"/>
</dbReference>
<dbReference type="Pfam" id="PF00829">
    <property type="entry name" value="Ribosomal_L21p"/>
    <property type="match status" value="1"/>
</dbReference>
<dbReference type="SUPFAM" id="SSF141091">
    <property type="entry name" value="L21p-like"/>
    <property type="match status" value="1"/>
</dbReference>
<dbReference type="PROSITE" id="PS01169">
    <property type="entry name" value="RIBOSOMAL_L21"/>
    <property type="match status" value="1"/>
</dbReference>
<feature type="chain" id="PRO_1000143868" description="Large ribosomal subunit protein bL21">
    <location>
        <begin position="1"/>
        <end position="100"/>
    </location>
</feature>
<comment type="function">
    <text evidence="1">This protein binds to 23S rRNA in the presence of protein L20.</text>
</comment>
<comment type="subunit">
    <text evidence="1">Part of the 50S ribosomal subunit. Contacts protein L20.</text>
</comment>
<comment type="similarity">
    <text evidence="1">Belongs to the bacterial ribosomal protein bL21 family.</text>
</comment>
<sequence>MFAIFQTGGKQYKVQQGEKIYVEKLDLEVGSKISFDQVIMVEGSVGTPFVKNAVVNATVLKQGKQKKINIIKFKSKKHHLKRQGHRQPYTQLVIDSISVK</sequence>
<reference key="1">
    <citation type="submission" date="2008-10" db="EMBL/GenBank/DDBJ databases">
        <title>Genome sequence of Ureaplasma urealyticum serovar 10 ATCC-33699.</title>
        <authorList>
            <person name="Shrivastava S."/>
            <person name="Methe B.A."/>
            <person name="Glass J."/>
            <person name="White K."/>
            <person name="Duffy L.B."/>
        </authorList>
    </citation>
    <scope>NUCLEOTIDE SEQUENCE [LARGE SCALE GENOMIC DNA]</scope>
    <source>
        <strain>ATCC 33699 / Western</strain>
    </source>
</reference>
<evidence type="ECO:0000255" key="1">
    <source>
        <dbReference type="HAMAP-Rule" id="MF_01363"/>
    </source>
</evidence>
<evidence type="ECO:0000305" key="2"/>
<protein>
    <recommendedName>
        <fullName evidence="1">Large ribosomal subunit protein bL21</fullName>
    </recommendedName>
    <alternativeName>
        <fullName evidence="2">50S ribosomal protein L21</fullName>
    </alternativeName>
</protein>
<organism>
    <name type="scientific">Ureaplasma urealyticum serovar 10 (strain ATCC 33699 / Western)</name>
    <dbReference type="NCBI Taxonomy" id="565575"/>
    <lineage>
        <taxon>Bacteria</taxon>
        <taxon>Bacillati</taxon>
        <taxon>Mycoplasmatota</taxon>
        <taxon>Mycoplasmoidales</taxon>
        <taxon>Mycoplasmoidaceae</taxon>
        <taxon>Ureaplasma</taxon>
    </lineage>
</organism>
<name>RL21_UREU1</name>
<accession>B5ZB20</accession>
<gene>
    <name evidence="1" type="primary">rplU</name>
    <name type="ordered locus">UUR10_0205</name>
</gene>